<evidence type="ECO:0000250" key="1"/>
<evidence type="ECO:0000305" key="2"/>
<name>PYRDB_BACCR</name>
<reference key="1">
    <citation type="journal article" date="2003" name="Nature">
        <title>Genome sequence of Bacillus cereus and comparative analysis with Bacillus anthracis.</title>
        <authorList>
            <person name="Ivanova N."/>
            <person name="Sorokin A."/>
            <person name="Anderson I."/>
            <person name="Galleron N."/>
            <person name="Candelon B."/>
            <person name="Kapatral V."/>
            <person name="Bhattacharyya A."/>
            <person name="Reznik G."/>
            <person name="Mikhailova N."/>
            <person name="Lapidus A."/>
            <person name="Chu L."/>
            <person name="Mazur M."/>
            <person name="Goltsman E."/>
            <person name="Larsen N."/>
            <person name="D'Souza M."/>
            <person name="Walunas T."/>
            <person name="Grechkin Y."/>
            <person name="Pusch G."/>
            <person name="Haselkorn R."/>
            <person name="Fonstein M."/>
            <person name="Ehrlich S.D."/>
            <person name="Overbeek R."/>
            <person name="Kyrpides N.C."/>
        </authorList>
    </citation>
    <scope>NUCLEOTIDE SEQUENCE [LARGE SCALE GENOMIC DNA]</scope>
    <source>
        <strain>ATCC 14579 / DSM 31 / CCUG 7414 / JCM 2152 / NBRC 15305 / NCIMB 9373 / NCTC 2599 / NRRL B-3711</strain>
    </source>
</reference>
<protein>
    <recommendedName>
        <fullName>Dihydroorotate dehydrogenase B (NAD(+)), catalytic subunit</fullName>
        <shortName>DHOD B</shortName>
        <shortName>DHODase B</shortName>
        <shortName>DHOdehase B</shortName>
        <ecNumber>1.3.1.14</ecNumber>
    </recommendedName>
    <alternativeName>
        <fullName>Dihydroorotate oxidase B</fullName>
    </alternativeName>
    <alternativeName>
        <fullName>Orotate reductase (NADH)</fullName>
    </alternativeName>
</protein>
<accession>Q819S5</accession>
<dbReference type="EC" id="1.3.1.14"/>
<dbReference type="EMBL" id="AE016877">
    <property type="protein sequence ID" value="AAP10805.1"/>
    <property type="molecule type" value="Genomic_DNA"/>
</dbReference>
<dbReference type="RefSeq" id="NP_833604.1">
    <property type="nucleotide sequence ID" value="NC_004722.1"/>
</dbReference>
<dbReference type="RefSeq" id="WP_001081049.1">
    <property type="nucleotide sequence ID" value="NZ_CP138336.1"/>
</dbReference>
<dbReference type="SMR" id="Q819S5"/>
<dbReference type="STRING" id="226900.BC_3884"/>
<dbReference type="KEGG" id="bce:BC3884"/>
<dbReference type="PATRIC" id="fig|226900.8.peg.4006"/>
<dbReference type="HOGENOM" id="CLU_042042_0_0_9"/>
<dbReference type="OrthoDB" id="9794954at2"/>
<dbReference type="UniPathway" id="UPA00070">
    <property type="reaction ID" value="UER00945"/>
</dbReference>
<dbReference type="Proteomes" id="UP000001417">
    <property type="component" value="Chromosome"/>
</dbReference>
<dbReference type="GO" id="GO:0005737">
    <property type="term" value="C:cytoplasm"/>
    <property type="evidence" value="ECO:0000318"/>
    <property type="project" value="GO_Central"/>
</dbReference>
<dbReference type="GO" id="GO:0004589">
    <property type="term" value="F:dihydroorotate dehydrogenase (NAD+) activity"/>
    <property type="evidence" value="ECO:0007669"/>
    <property type="project" value="UniProtKB-EC"/>
</dbReference>
<dbReference type="GO" id="GO:0004152">
    <property type="term" value="F:dihydroorotate dehydrogenase activity"/>
    <property type="evidence" value="ECO:0000318"/>
    <property type="project" value="GO_Central"/>
</dbReference>
<dbReference type="GO" id="GO:0006207">
    <property type="term" value="P:'de novo' pyrimidine nucleobase biosynthetic process"/>
    <property type="evidence" value="ECO:0000318"/>
    <property type="project" value="GO_Central"/>
</dbReference>
<dbReference type="GO" id="GO:0044205">
    <property type="term" value="P:'de novo' UMP biosynthetic process"/>
    <property type="evidence" value="ECO:0007669"/>
    <property type="project" value="UniProtKB-UniRule"/>
</dbReference>
<dbReference type="CDD" id="cd04740">
    <property type="entry name" value="DHOD_1B_like"/>
    <property type="match status" value="1"/>
</dbReference>
<dbReference type="FunFam" id="3.20.20.70:FF:000069">
    <property type="entry name" value="Dihydroorotate dehydrogenase"/>
    <property type="match status" value="1"/>
</dbReference>
<dbReference type="Gene3D" id="3.20.20.70">
    <property type="entry name" value="Aldolase class I"/>
    <property type="match status" value="1"/>
</dbReference>
<dbReference type="HAMAP" id="MF_00224">
    <property type="entry name" value="DHO_dh_type1"/>
    <property type="match status" value="1"/>
</dbReference>
<dbReference type="InterPro" id="IPR013785">
    <property type="entry name" value="Aldolase_TIM"/>
</dbReference>
<dbReference type="InterPro" id="IPR050074">
    <property type="entry name" value="DHO_dehydrogenase"/>
</dbReference>
<dbReference type="InterPro" id="IPR033888">
    <property type="entry name" value="DHOD_1B"/>
</dbReference>
<dbReference type="InterPro" id="IPR024920">
    <property type="entry name" value="Dihydroorotate_DH_1"/>
</dbReference>
<dbReference type="InterPro" id="IPR012135">
    <property type="entry name" value="Dihydroorotate_DH_1_2"/>
</dbReference>
<dbReference type="InterPro" id="IPR005720">
    <property type="entry name" value="Dihydroorotate_DH_cat"/>
</dbReference>
<dbReference type="InterPro" id="IPR001295">
    <property type="entry name" value="Dihydroorotate_DH_CS"/>
</dbReference>
<dbReference type="InterPro" id="IPR049622">
    <property type="entry name" value="Dihydroorotate_DH_I"/>
</dbReference>
<dbReference type="NCBIfam" id="NF005574">
    <property type="entry name" value="PRK07259.1"/>
    <property type="match status" value="1"/>
</dbReference>
<dbReference type="NCBIfam" id="TIGR01037">
    <property type="entry name" value="pyrD_sub1_fam"/>
    <property type="match status" value="1"/>
</dbReference>
<dbReference type="PANTHER" id="PTHR48109:SF1">
    <property type="entry name" value="DIHYDROOROTATE DEHYDROGENASE (FUMARATE)"/>
    <property type="match status" value="1"/>
</dbReference>
<dbReference type="PANTHER" id="PTHR48109">
    <property type="entry name" value="DIHYDROOROTATE DEHYDROGENASE (QUINONE), MITOCHONDRIAL-RELATED"/>
    <property type="match status" value="1"/>
</dbReference>
<dbReference type="Pfam" id="PF01180">
    <property type="entry name" value="DHO_dh"/>
    <property type="match status" value="1"/>
</dbReference>
<dbReference type="PIRSF" id="PIRSF000164">
    <property type="entry name" value="DHO_oxidase"/>
    <property type="match status" value="1"/>
</dbReference>
<dbReference type="SUPFAM" id="SSF51395">
    <property type="entry name" value="FMN-linked oxidoreductases"/>
    <property type="match status" value="1"/>
</dbReference>
<dbReference type="PROSITE" id="PS00911">
    <property type="entry name" value="DHODEHASE_1"/>
    <property type="match status" value="1"/>
</dbReference>
<dbReference type="PROSITE" id="PS00912">
    <property type="entry name" value="DHODEHASE_2"/>
    <property type="match status" value="1"/>
</dbReference>
<gene>
    <name type="primary">pyrD</name>
    <name type="ordered locus">BC_3884</name>
</gene>
<keyword id="KW-0963">Cytoplasm</keyword>
<keyword id="KW-0285">Flavoprotein</keyword>
<keyword id="KW-0288">FMN</keyword>
<keyword id="KW-0520">NAD</keyword>
<keyword id="KW-0560">Oxidoreductase</keyword>
<keyword id="KW-0665">Pyrimidine biosynthesis</keyword>
<keyword id="KW-1185">Reference proteome</keyword>
<comment type="function">
    <text evidence="1">Catalyzes the conversion of dihydroorotate to orotate with NAD(+) as electron acceptor.</text>
</comment>
<comment type="catalytic activity">
    <reaction>
        <text>(S)-dihydroorotate + NAD(+) = orotate + NADH + H(+)</text>
        <dbReference type="Rhea" id="RHEA:13513"/>
        <dbReference type="ChEBI" id="CHEBI:15378"/>
        <dbReference type="ChEBI" id="CHEBI:30839"/>
        <dbReference type="ChEBI" id="CHEBI:30864"/>
        <dbReference type="ChEBI" id="CHEBI:57540"/>
        <dbReference type="ChEBI" id="CHEBI:57945"/>
        <dbReference type="EC" id="1.3.1.14"/>
    </reaction>
</comment>
<comment type="cofactor">
    <cofactor evidence="1">
        <name>FMN</name>
        <dbReference type="ChEBI" id="CHEBI:58210"/>
    </cofactor>
    <text evidence="1">Binds 1 FMN per subunit.</text>
</comment>
<comment type="pathway">
    <text>Pyrimidine metabolism; UMP biosynthesis via de novo pathway; orotate from (S)-dihydroorotate (NAD(+) route): step 1/1.</text>
</comment>
<comment type="subunit">
    <text evidence="1">Heterotetramer of 2 PyrK and 2 PyrD type B subunits.</text>
</comment>
<comment type="subcellular location">
    <subcellularLocation>
        <location evidence="1">Cytoplasm</location>
    </subcellularLocation>
</comment>
<comment type="similarity">
    <text evidence="2">Belongs to the dihydroorotate dehydrogenase family. Type 1 subfamily.</text>
</comment>
<feature type="chain" id="PRO_1000024125" description="Dihydroorotate dehydrogenase B (NAD(+)), catalytic subunit">
    <location>
        <begin position="1"/>
        <end position="309"/>
    </location>
</feature>
<feature type="active site" description="Nucleophile">
    <location>
        <position position="130"/>
    </location>
</feature>
<feature type="binding site" evidence="1">
    <location>
        <position position="21"/>
    </location>
    <ligand>
        <name>FMN</name>
        <dbReference type="ChEBI" id="CHEBI:58210"/>
    </ligand>
</feature>
<feature type="binding site" evidence="1">
    <location>
        <begin position="45"/>
        <end position="46"/>
    </location>
    <ligand>
        <name>FMN</name>
        <dbReference type="ChEBI" id="CHEBI:58210"/>
    </ligand>
</feature>
<feature type="binding site" evidence="1">
    <location>
        <position position="45"/>
    </location>
    <ligand>
        <name>substrate</name>
    </ligand>
</feature>
<feature type="binding site" evidence="1">
    <location>
        <begin position="69"/>
        <end position="73"/>
    </location>
    <ligand>
        <name>substrate</name>
    </ligand>
</feature>
<feature type="binding site" evidence="1">
    <location>
        <position position="99"/>
    </location>
    <ligand>
        <name>FMN</name>
        <dbReference type="ChEBI" id="CHEBI:58210"/>
    </ligand>
</feature>
<feature type="binding site" evidence="1">
    <location>
        <position position="127"/>
    </location>
    <ligand>
        <name>FMN</name>
        <dbReference type="ChEBI" id="CHEBI:58210"/>
    </ligand>
</feature>
<feature type="binding site" evidence="1">
    <location>
        <position position="127"/>
    </location>
    <ligand>
        <name>substrate</name>
    </ligand>
</feature>
<feature type="binding site" evidence="1">
    <location>
        <position position="165"/>
    </location>
    <ligand>
        <name>FMN</name>
        <dbReference type="ChEBI" id="CHEBI:58210"/>
    </ligand>
</feature>
<feature type="binding site" evidence="1">
    <location>
        <position position="191"/>
    </location>
    <ligand>
        <name>FMN</name>
        <dbReference type="ChEBI" id="CHEBI:58210"/>
    </ligand>
</feature>
<feature type="binding site" evidence="1">
    <location>
        <begin position="192"/>
        <end position="193"/>
    </location>
    <ligand>
        <name>substrate</name>
    </ligand>
</feature>
<feature type="binding site" evidence="1">
    <location>
        <position position="217"/>
    </location>
    <ligand>
        <name>FMN</name>
        <dbReference type="ChEBI" id="CHEBI:58210"/>
    </ligand>
</feature>
<feature type="binding site" evidence="1">
    <location>
        <begin position="243"/>
        <end position="244"/>
    </location>
    <ligand>
        <name>FMN</name>
        <dbReference type="ChEBI" id="CHEBI:58210"/>
    </ligand>
</feature>
<feature type="binding site" evidence="1">
    <location>
        <begin position="265"/>
        <end position="266"/>
    </location>
    <ligand>
        <name>FMN</name>
        <dbReference type="ChEBI" id="CHEBI:58210"/>
    </ligand>
</feature>
<proteinExistence type="inferred from homology"/>
<organism>
    <name type="scientific">Bacillus cereus (strain ATCC 14579 / DSM 31 / CCUG 7414 / JCM 2152 / NBRC 15305 / NCIMB 9373 / NCTC 2599 / NRRL B-3711)</name>
    <dbReference type="NCBI Taxonomy" id="226900"/>
    <lineage>
        <taxon>Bacteria</taxon>
        <taxon>Bacillati</taxon>
        <taxon>Bacillota</taxon>
        <taxon>Bacilli</taxon>
        <taxon>Bacillales</taxon>
        <taxon>Bacillaceae</taxon>
        <taxon>Bacillus</taxon>
        <taxon>Bacillus cereus group</taxon>
    </lineage>
</organism>
<sequence>MNRLQVELPGLSLKNPIIPASGCFGFGREYAQFYDLSVLGSIMIKATTEQPRYGNPTPRVAETPGGMLNAIGLQNPGLDKVMNSELPWLEQFDLPIIANVAGSQAEDYVAVAKEISKAPNVHALELNISCPNVKTGGIAFGTNPEIAADLTKRVKEVSEVPVYVKLSPNVANIVEIAKAIENAGADGLTMINTLLGMRLDLKTAKPILANRTGGLSGPAIKPVAIRMVHEVSQAVNIPIIGMGGIETAEDVIEFFYAGASAVAVGTANFIDPFVCPTIIEELPALLDELGFDHISECQGRSWKQTCHSR</sequence>